<dbReference type="EC" id="3.1.26.3" evidence="1"/>
<dbReference type="EMBL" id="CP001177">
    <property type="protein sequence ID" value="ACJ78092.1"/>
    <property type="molecule type" value="Genomic_DNA"/>
</dbReference>
<dbReference type="SMR" id="B7HLI2"/>
<dbReference type="KEGG" id="bcr:BCAH187_A3897"/>
<dbReference type="HOGENOM" id="CLU_000907_1_3_9"/>
<dbReference type="Proteomes" id="UP000002214">
    <property type="component" value="Chromosome"/>
</dbReference>
<dbReference type="GO" id="GO:0005737">
    <property type="term" value="C:cytoplasm"/>
    <property type="evidence" value="ECO:0007669"/>
    <property type="project" value="UniProtKB-SubCell"/>
</dbReference>
<dbReference type="GO" id="GO:0003725">
    <property type="term" value="F:double-stranded RNA binding"/>
    <property type="evidence" value="ECO:0007669"/>
    <property type="project" value="TreeGrafter"/>
</dbReference>
<dbReference type="GO" id="GO:0046872">
    <property type="term" value="F:metal ion binding"/>
    <property type="evidence" value="ECO:0007669"/>
    <property type="project" value="UniProtKB-KW"/>
</dbReference>
<dbReference type="GO" id="GO:0004525">
    <property type="term" value="F:ribonuclease III activity"/>
    <property type="evidence" value="ECO:0007669"/>
    <property type="project" value="UniProtKB-UniRule"/>
</dbReference>
<dbReference type="GO" id="GO:0019843">
    <property type="term" value="F:rRNA binding"/>
    <property type="evidence" value="ECO:0007669"/>
    <property type="project" value="UniProtKB-KW"/>
</dbReference>
<dbReference type="GO" id="GO:0006397">
    <property type="term" value="P:mRNA processing"/>
    <property type="evidence" value="ECO:0007669"/>
    <property type="project" value="UniProtKB-UniRule"/>
</dbReference>
<dbReference type="GO" id="GO:0010468">
    <property type="term" value="P:regulation of gene expression"/>
    <property type="evidence" value="ECO:0007669"/>
    <property type="project" value="TreeGrafter"/>
</dbReference>
<dbReference type="GO" id="GO:0006364">
    <property type="term" value="P:rRNA processing"/>
    <property type="evidence" value="ECO:0007669"/>
    <property type="project" value="UniProtKB-UniRule"/>
</dbReference>
<dbReference type="GO" id="GO:0008033">
    <property type="term" value="P:tRNA processing"/>
    <property type="evidence" value="ECO:0007669"/>
    <property type="project" value="UniProtKB-KW"/>
</dbReference>
<dbReference type="CDD" id="cd10845">
    <property type="entry name" value="DSRM_RNAse_III_family"/>
    <property type="match status" value="1"/>
</dbReference>
<dbReference type="CDD" id="cd00593">
    <property type="entry name" value="RIBOc"/>
    <property type="match status" value="1"/>
</dbReference>
<dbReference type="FunFam" id="1.10.1520.10:FF:000001">
    <property type="entry name" value="Ribonuclease 3"/>
    <property type="match status" value="1"/>
</dbReference>
<dbReference type="FunFam" id="3.30.160.20:FF:000003">
    <property type="entry name" value="Ribonuclease 3"/>
    <property type="match status" value="1"/>
</dbReference>
<dbReference type="Gene3D" id="3.30.160.20">
    <property type="match status" value="1"/>
</dbReference>
<dbReference type="Gene3D" id="1.10.1520.10">
    <property type="entry name" value="Ribonuclease III domain"/>
    <property type="match status" value="1"/>
</dbReference>
<dbReference type="HAMAP" id="MF_00104">
    <property type="entry name" value="RNase_III"/>
    <property type="match status" value="1"/>
</dbReference>
<dbReference type="InterPro" id="IPR014720">
    <property type="entry name" value="dsRBD_dom"/>
</dbReference>
<dbReference type="InterPro" id="IPR011907">
    <property type="entry name" value="RNase_III"/>
</dbReference>
<dbReference type="InterPro" id="IPR000999">
    <property type="entry name" value="RNase_III_dom"/>
</dbReference>
<dbReference type="InterPro" id="IPR036389">
    <property type="entry name" value="RNase_III_sf"/>
</dbReference>
<dbReference type="NCBIfam" id="TIGR02191">
    <property type="entry name" value="RNaseIII"/>
    <property type="match status" value="1"/>
</dbReference>
<dbReference type="PANTHER" id="PTHR11207:SF0">
    <property type="entry name" value="RIBONUCLEASE 3"/>
    <property type="match status" value="1"/>
</dbReference>
<dbReference type="PANTHER" id="PTHR11207">
    <property type="entry name" value="RIBONUCLEASE III"/>
    <property type="match status" value="1"/>
</dbReference>
<dbReference type="Pfam" id="PF00035">
    <property type="entry name" value="dsrm"/>
    <property type="match status" value="1"/>
</dbReference>
<dbReference type="Pfam" id="PF14622">
    <property type="entry name" value="Ribonucleas_3_3"/>
    <property type="match status" value="1"/>
</dbReference>
<dbReference type="SMART" id="SM00358">
    <property type="entry name" value="DSRM"/>
    <property type="match status" value="1"/>
</dbReference>
<dbReference type="SMART" id="SM00535">
    <property type="entry name" value="RIBOc"/>
    <property type="match status" value="1"/>
</dbReference>
<dbReference type="SUPFAM" id="SSF54768">
    <property type="entry name" value="dsRNA-binding domain-like"/>
    <property type="match status" value="1"/>
</dbReference>
<dbReference type="SUPFAM" id="SSF69065">
    <property type="entry name" value="RNase III domain-like"/>
    <property type="match status" value="1"/>
</dbReference>
<dbReference type="PROSITE" id="PS50137">
    <property type="entry name" value="DS_RBD"/>
    <property type="match status" value="1"/>
</dbReference>
<dbReference type="PROSITE" id="PS00517">
    <property type="entry name" value="RNASE_3_1"/>
    <property type="match status" value="1"/>
</dbReference>
<dbReference type="PROSITE" id="PS50142">
    <property type="entry name" value="RNASE_3_2"/>
    <property type="match status" value="1"/>
</dbReference>
<evidence type="ECO:0000255" key="1">
    <source>
        <dbReference type="HAMAP-Rule" id="MF_00104"/>
    </source>
</evidence>
<proteinExistence type="inferred from homology"/>
<keyword id="KW-0963">Cytoplasm</keyword>
<keyword id="KW-0255">Endonuclease</keyword>
<keyword id="KW-0378">Hydrolase</keyword>
<keyword id="KW-0460">Magnesium</keyword>
<keyword id="KW-0479">Metal-binding</keyword>
<keyword id="KW-0507">mRNA processing</keyword>
<keyword id="KW-0540">Nuclease</keyword>
<keyword id="KW-0694">RNA-binding</keyword>
<keyword id="KW-0698">rRNA processing</keyword>
<keyword id="KW-0699">rRNA-binding</keyword>
<keyword id="KW-0819">tRNA processing</keyword>
<accession>B7HLI2</accession>
<sequence>MPYRKYREKKYETKYREAFKVFQEKIGITFTDEKLLIQAFTHSSYVNEHRKKPHEDNERLEFLGDAVLELTVSQYLFQKYPTMSEGELTKLRAAIVCEPSLVRFANELSFGSLVLLGKGEEMTGGRERPALLADVFEAFIGALYLDQGLETVWGFLKEIVYPKINEGAFSHVMDYKSQLQELIQRDGSGNIEYQILQEKGPAHNREFVSRVTLNNVALGLGSGKSKKEAEQQAAAEALKKLKEQL</sequence>
<comment type="function">
    <text evidence="1">Digests double-stranded RNA. Involved in the processing of primary rRNA transcript to yield the immediate precursors to the large and small rRNAs (23S and 16S). Processes some mRNAs, and tRNAs when they are encoded in the rRNA operon. Processes pre-crRNA and tracrRNA of type II CRISPR loci if present in the organism.</text>
</comment>
<comment type="catalytic activity">
    <reaction evidence="1">
        <text>Endonucleolytic cleavage to 5'-phosphomonoester.</text>
        <dbReference type="EC" id="3.1.26.3"/>
    </reaction>
</comment>
<comment type="cofactor">
    <cofactor evidence="1">
        <name>Mg(2+)</name>
        <dbReference type="ChEBI" id="CHEBI:18420"/>
    </cofactor>
</comment>
<comment type="subunit">
    <text evidence="1">Homodimer.</text>
</comment>
<comment type="subcellular location">
    <subcellularLocation>
        <location evidence="1">Cytoplasm</location>
    </subcellularLocation>
</comment>
<comment type="similarity">
    <text evidence="1">Belongs to the ribonuclease III family.</text>
</comment>
<protein>
    <recommendedName>
        <fullName evidence="1">Ribonuclease 3</fullName>
        <ecNumber evidence="1">3.1.26.3</ecNumber>
    </recommendedName>
    <alternativeName>
        <fullName evidence="1">Ribonuclease III</fullName>
        <shortName evidence="1">RNase III</shortName>
    </alternativeName>
</protein>
<name>RNC_BACC7</name>
<organism>
    <name type="scientific">Bacillus cereus (strain AH187)</name>
    <dbReference type="NCBI Taxonomy" id="405534"/>
    <lineage>
        <taxon>Bacteria</taxon>
        <taxon>Bacillati</taxon>
        <taxon>Bacillota</taxon>
        <taxon>Bacilli</taxon>
        <taxon>Bacillales</taxon>
        <taxon>Bacillaceae</taxon>
        <taxon>Bacillus</taxon>
        <taxon>Bacillus cereus group</taxon>
    </lineage>
</organism>
<gene>
    <name evidence="1" type="primary">rnc</name>
    <name type="ordered locus">BCAH187_A3897</name>
</gene>
<feature type="chain" id="PRO_1000194408" description="Ribonuclease 3">
    <location>
        <begin position="1"/>
        <end position="245"/>
    </location>
</feature>
<feature type="domain" description="RNase III" evidence="1">
    <location>
        <begin position="19"/>
        <end position="148"/>
    </location>
</feature>
<feature type="domain" description="DRBM" evidence="1">
    <location>
        <begin position="174"/>
        <end position="243"/>
    </location>
</feature>
<feature type="active site" evidence="1">
    <location>
        <position position="65"/>
    </location>
</feature>
<feature type="active site" evidence="1">
    <location>
        <position position="137"/>
    </location>
</feature>
<feature type="binding site" evidence="1">
    <location>
        <position position="61"/>
    </location>
    <ligand>
        <name>Mg(2+)</name>
        <dbReference type="ChEBI" id="CHEBI:18420"/>
    </ligand>
</feature>
<feature type="binding site" evidence="1">
    <location>
        <position position="134"/>
    </location>
    <ligand>
        <name>Mg(2+)</name>
        <dbReference type="ChEBI" id="CHEBI:18420"/>
    </ligand>
</feature>
<feature type="binding site" evidence="1">
    <location>
        <position position="137"/>
    </location>
    <ligand>
        <name>Mg(2+)</name>
        <dbReference type="ChEBI" id="CHEBI:18420"/>
    </ligand>
</feature>
<reference key="1">
    <citation type="submission" date="2008-10" db="EMBL/GenBank/DDBJ databases">
        <title>Genome sequence of Bacillus cereus AH187.</title>
        <authorList>
            <person name="Dodson R.J."/>
            <person name="Durkin A.S."/>
            <person name="Rosovitz M.J."/>
            <person name="Rasko D.A."/>
            <person name="Kolsto A.B."/>
            <person name="Okstad O.A."/>
            <person name="Ravel J."/>
            <person name="Sutton G."/>
        </authorList>
    </citation>
    <scope>NUCLEOTIDE SEQUENCE [LARGE SCALE GENOMIC DNA]</scope>
    <source>
        <strain>AH187</strain>
    </source>
</reference>